<comment type="function">
    <text evidence="1">Catalyzes the decarboxylation of orotidine 5'-monophosphate (OMP) to uridine 5'-monophosphate (UMP).</text>
</comment>
<comment type="catalytic activity">
    <reaction evidence="1">
        <text>orotidine 5'-phosphate + H(+) = UMP + CO2</text>
        <dbReference type="Rhea" id="RHEA:11596"/>
        <dbReference type="ChEBI" id="CHEBI:15378"/>
        <dbReference type="ChEBI" id="CHEBI:16526"/>
        <dbReference type="ChEBI" id="CHEBI:57538"/>
        <dbReference type="ChEBI" id="CHEBI:57865"/>
        <dbReference type="EC" id="4.1.1.23"/>
    </reaction>
</comment>
<comment type="pathway">
    <text evidence="1">Pyrimidine metabolism; UMP biosynthesis via de novo pathway; UMP from orotate: step 2/2.</text>
</comment>
<comment type="subunit">
    <text evidence="1">Homodimer.</text>
</comment>
<comment type="similarity">
    <text evidence="1">Belongs to the OMP decarboxylase family. Type 1 subfamily.</text>
</comment>
<proteinExistence type="inferred from homology"/>
<dbReference type="EC" id="4.1.1.23" evidence="1"/>
<dbReference type="EMBL" id="BX548174">
    <property type="protein sequence ID" value="CAE19787.1"/>
    <property type="molecule type" value="Genomic_DNA"/>
</dbReference>
<dbReference type="RefSeq" id="WP_011132962.1">
    <property type="nucleotide sequence ID" value="NC_005072.1"/>
</dbReference>
<dbReference type="SMR" id="Q7V0D8"/>
<dbReference type="STRING" id="59919.PMM1328"/>
<dbReference type="KEGG" id="pmm:PMM1328"/>
<dbReference type="eggNOG" id="COG0284">
    <property type="taxonomic scope" value="Bacteria"/>
</dbReference>
<dbReference type="HOGENOM" id="CLU_067069_1_0_3"/>
<dbReference type="OrthoDB" id="9806203at2"/>
<dbReference type="UniPathway" id="UPA00070">
    <property type="reaction ID" value="UER00120"/>
</dbReference>
<dbReference type="Proteomes" id="UP000001026">
    <property type="component" value="Chromosome"/>
</dbReference>
<dbReference type="GO" id="GO:0005829">
    <property type="term" value="C:cytosol"/>
    <property type="evidence" value="ECO:0007669"/>
    <property type="project" value="TreeGrafter"/>
</dbReference>
<dbReference type="GO" id="GO:0004590">
    <property type="term" value="F:orotidine-5'-phosphate decarboxylase activity"/>
    <property type="evidence" value="ECO:0007669"/>
    <property type="project" value="UniProtKB-UniRule"/>
</dbReference>
<dbReference type="GO" id="GO:0006207">
    <property type="term" value="P:'de novo' pyrimidine nucleobase biosynthetic process"/>
    <property type="evidence" value="ECO:0007669"/>
    <property type="project" value="InterPro"/>
</dbReference>
<dbReference type="GO" id="GO:0044205">
    <property type="term" value="P:'de novo' UMP biosynthetic process"/>
    <property type="evidence" value="ECO:0007669"/>
    <property type="project" value="UniProtKB-UniRule"/>
</dbReference>
<dbReference type="CDD" id="cd04725">
    <property type="entry name" value="OMP_decarboxylase_like"/>
    <property type="match status" value="1"/>
</dbReference>
<dbReference type="Gene3D" id="3.20.20.70">
    <property type="entry name" value="Aldolase class I"/>
    <property type="match status" value="1"/>
</dbReference>
<dbReference type="HAMAP" id="MF_01200_B">
    <property type="entry name" value="OMPdecase_type1_B"/>
    <property type="match status" value="1"/>
</dbReference>
<dbReference type="InterPro" id="IPR013785">
    <property type="entry name" value="Aldolase_TIM"/>
</dbReference>
<dbReference type="InterPro" id="IPR014732">
    <property type="entry name" value="OMPdecase"/>
</dbReference>
<dbReference type="InterPro" id="IPR018089">
    <property type="entry name" value="OMPdecase_AS"/>
</dbReference>
<dbReference type="InterPro" id="IPR047596">
    <property type="entry name" value="OMPdecase_bac"/>
</dbReference>
<dbReference type="InterPro" id="IPR001754">
    <property type="entry name" value="OMPdeCOase_dom"/>
</dbReference>
<dbReference type="InterPro" id="IPR011060">
    <property type="entry name" value="RibuloseP-bd_barrel"/>
</dbReference>
<dbReference type="NCBIfam" id="NF001273">
    <property type="entry name" value="PRK00230.1"/>
    <property type="match status" value="1"/>
</dbReference>
<dbReference type="NCBIfam" id="TIGR01740">
    <property type="entry name" value="pyrF"/>
    <property type="match status" value="1"/>
</dbReference>
<dbReference type="PANTHER" id="PTHR32119">
    <property type="entry name" value="OROTIDINE 5'-PHOSPHATE DECARBOXYLASE"/>
    <property type="match status" value="1"/>
</dbReference>
<dbReference type="PANTHER" id="PTHR32119:SF2">
    <property type="entry name" value="OROTIDINE 5'-PHOSPHATE DECARBOXYLASE"/>
    <property type="match status" value="1"/>
</dbReference>
<dbReference type="Pfam" id="PF00215">
    <property type="entry name" value="OMPdecase"/>
    <property type="match status" value="1"/>
</dbReference>
<dbReference type="SMART" id="SM00934">
    <property type="entry name" value="OMPdecase"/>
    <property type="match status" value="1"/>
</dbReference>
<dbReference type="SUPFAM" id="SSF51366">
    <property type="entry name" value="Ribulose-phoshate binding barrel"/>
    <property type="match status" value="1"/>
</dbReference>
<dbReference type="PROSITE" id="PS00156">
    <property type="entry name" value="OMPDECASE"/>
    <property type="match status" value="1"/>
</dbReference>
<accession>Q7V0D8</accession>
<feature type="chain" id="PRO_0000134564" description="Orotidine 5'-phosphate decarboxylase">
    <location>
        <begin position="1"/>
        <end position="239"/>
    </location>
</feature>
<feature type="active site" description="Proton donor" evidence="1">
    <location>
        <position position="65"/>
    </location>
</feature>
<feature type="binding site" evidence="1">
    <location>
        <position position="15"/>
    </location>
    <ligand>
        <name>substrate</name>
    </ligand>
</feature>
<feature type="binding site" evidence="1">
    <location>
        <position position="36"/>
    </location>
    <ligand>
        <name>substrate</name>
    </ligand>
</feature>
<feature type="binding site" evidence="1">
    <location>
        <begin position="63"/>
        <end position="72"/>
    </location>
    <ligand>
        <name>substrate</name>
    </ligand>
</feature>
<feature type="binding site" evidence="1">
    <location>
        <position position="127"/>
    </location>
    <ligand>
        <name>substrate</name>
    </ligand>
</feature>
<feature type="binding site" evidence="1">
    <location>
        <position position="189"/>
    </location>
    <ligand>
        <name>substrate</name>
    </ligand>
</feature>
<feature type="binding site" evidence="1">
    <location>
        <position position="198"/>
    </location>
    <ligand>
        <name>substrate</name>
    </ligand>
</feature>
<feature type="binding site" evidence="1">
    <location>
        <position position="218"/>
    </location>
    <ligand>
        <name>substrate</name>
    </ligand>
</feature>
<feature type="binding site" evidence="1">
    <location>
        <position position="219"/>
    </location>
    <ligand>
        <name>substrate</name>
    </ligand>
</feature>
<evidence type="ECO:0000255" key="1">
    <source>
        <dbReference type="HAMAP-Rule" id="MF_01200"/>
    </source>
</evidence>
<keyword id="KW-0210">Decarboxylase</keyword>
<keyword id="KW-0456">Lyase</keyword>
<keyword id="KW-0665">Pyrimidine biosynthesis</keyword>
<reference key="1">
    <citation type="journal article" date="2003" name="Nature">
        <title>Genome divergence in two Prochlorococcus ecotypes reflects oceanic niche differentiation.</title>
        <authorList>
            <person name="Rocap G."/>
            <person name="Larimer F.W."/>
            <person name="Lamerdin J.E."/>
            <person name="Malfatti S."/>
            <person name="Chain P."/>
            <person name="Ahlgren N.A."/>
            <person name="Arellano A."/>
            <person name="Coleman M."/>
            <person name="Hauser L."/>
            <person name="Hess W.R."/>
            <person name="Johnson Z.I."/>
            <person name="Land M.L."/>
            <person name="Lindell D."/>
            <person name="Post A.F."/>
            <person name="Regala W."/>
            <person name="Shah M."/>
            <person name="Shaw S.L."/>
            <person name="Steglich C."/>
            <person name="Sullivan M.B."/>
            <person name="Ting C.S."/>
            <person name="Tolonen A."/>
            <person name="Webb E.A."/>
            <person name="Zinser E.R."/>
            <person name="Chisholm S.W."/>
        </authorList>
    </citation>
    <scope>NUCLEOTIDE SEQUENCE [LARGE SCALE GENOMIC DNA]</scope>
    <source>
        <strain>CCMP1986 / NIES-2087 / MED4</strain>
    </source>
</reference>
<gene>
    <name evidence="1" type="primary">pyrF</name>
    <name type="ordered locus">PMM1328</name>
</gene>
<name>PYRF_PROMP</name>
<organism>
    <name type="scientific">Prochlorococcus marinus subsp. pastoris (strain CCMP1986 / NIES-2087 / MED4)</name>
    <dbReference type="NCBI Taxonomy" id="59919"/>
    <lineage>
        <taxon>Bacteria</taxon>
        <taxon>Bacillati</taxon>
        <taxon>Cyanobacteriota</taxon>
        <taxon>Cyanophyceae</taxon>
        <taxon>Synechococcales</taxon>
        <taxon>Prochlorococcaceae</taxon>
        <taxon>Prochlorococcus</taxon>
    </lineage>
</organism>
<sequence>MKKFNTEEKIILAIDGLDIFQAKVLLERCPNIKWVKVGLELFTREGPSVIKILKNLNKKIFLDLKFHDIPNTMSAACYEVSKLGVDIISVHASAGSKALTASKKASLEGAKIATVNAPCVIGITVLTSLSSEEFQTDLDRKNSIEENVIRLAKLSFDAGLDGCVCSPLEAKILRSMYKNNFELITPGIRTNIQKKDDQNRIMTPFEAISNGSSKLVIGRAITKAKDPNKAFLDICESIC</sequence>
<protein>
    <recommendedName>
        <fullName evidence="1">Orotidine 5'-phosphate decarboxylase</fullName>
        <ecNumber evidence="1">4.1.1.23</ecNumber>
    </recommendedName>
    <alternativeName>
        <fullName evidence="1">OMP decarboxylase</fullName>
        <shortName evidence="1">OMPDCase</shortName>
        <shortName evidence="1">OMPdecase</shortName>
    </alternativeName>
</protein>